<evidence type="ECO:0000250" key="1"/>
<evidence type="ECO:0000250" key="2">
    <source>
        <dbReference type="UniProtKB" id="Q9BYX2"/>
    </source>
</evidence>
<evidence type="ECO:0000255" key="3"/>
<evidence type="ECO:0000255" key="4">
    <source>
        <dbReference type="PROSITE-ProRule" id="PRU00145"/>
    </source>
</evidence>
<evidence type="ECO:0000255" key="5">
    <source>
        <dbReference type="PROSITE-ProRule" id="PRU00163"/>
    </source>
</evidence>
<evidence type="ECO:0000256" key="6">
    <source>
        <dbReference type="SAM" id="MobiDB-lite"/>
    </source>
</evidence>
<keyword id="KW-0007">Acetylation</keyword>
<keyword id="KW-0965">Cell junction</keyword>
<keyword id="KW-0175">Coiled coil</keyword>
<keyword id="KW-0963">Cytoplasm</keyword>
<keyword id="KW-0968">Cytoplasmic vesicle</keyword>
<keyword id="KW-0343">GTPase activation</keyword>
<keyword id="KW-0597">Phosphoprotein</keyword>
<keyword id="KW-1185">Reference proteome</keyword>
<feature type="chain" id="PRO_0000395192" description="TBC1 domain family member 2A">
    <location>
        <begin position="1"/>
        <end position="923"/>
    </location>
</feature>
<feature type="domain" description="PH" evidence="4">
    <location>
        <begin position="47"/>
        <end position="144"/>
    </location>
</feature>
<feature type="domain" description="Rab-GAP TBC" evidence="5">
    <location>
        <begin position="631"/>
        <end position="823"/>
    </location>
</feature>
<feature type="region of interest" description="Interaction with CADH1" evidence="1">
    <location>
        <begin position="1"/>
        <end position="171"/>
    </location>
</feature>
<feature type="region of interest" description="Disordered" evidence="6">
    <location>
        <begin position="1"/>
        <end position="39"/>
    </location>
</feature>
<feature type="region of interest" description="Disordered" evidence="6">
    <location>
        <begin position="146"/>
        <end position="166"/>
    </location>
</feature>
<feature type="region of interest" description="Disordered" evidence="6">
    <location>
        <begin position="232"/>
        <end position="289"/>
    </location>
</feature>
<feature type="region of interest" description="Interaction with RAC1" evidence="1">
    <location>
        <begin position="301"/>
        <end position="439"/>
    </location>
</feature>
<feature type="region of interest" description="Disordered" evidence="6">
    <location>
        <begin position="900"/>
        <end position="923"/>
    </location>
</feature>
<feature type="coiled-coil region" evidence="3">
    <location>
        <begin position="308"/>
        <end position="486"/>
    </location>
</feature>
<feature type="coiled-coil region" evidence="3">
    <location>
        <begin position="870"/>
        <end position="904"/>
    </location>
</feature>
<feature type="compositionally biased region" description="Acidic residues" evidence="6">
    <location>
        <begin position="914"/>
        <end position="923"/>
    </location>
</feature>
<feature type="modified residue" description="N-acetylmethionine" evidence="2">
    <location>
        <position position="1"/>
    </location>
</feature>
<feature type="modified residue" description="Phosphoserine" evidence="2">
    <location>
        <position position="915"/>
    </location>
</feature>
<sequence length="923" mass="104425">MDGAHENAAESSSSVPRSEEPACSAGGPEVLPPEESEGCAGSLDAAPKKLCGYLSKFGGKGPIRGWKSRWFFYDERKCHLYYSRTAQDANPLDSIDLSSAVFDCKADAEEGTFEIKTPSRIITLKAATKQVMLYWLQQLQTKRWEFHSSPPAPPAAPDAAPAGNGPTLRLELEQEEEELEDFLSPVRTPPGLVGAAAALQPVPTKPLALQNISLKHLGTEIQNTMYNIRSNRQAQGTGHGPPGEDPPLSAEPQRAEWPLPSDPGTPGKDPADSPKPTPKSSLTANLIQKAKRPNNTFPLFAEGLTRTRTAQEKILALEQQVLMLTKELKSQKELVRILHKALEAAQQEKRASSAYLAAAEDKDRLELVRHKVRQIAELGKRVEALERERESLAQTAGLREQQVQELQRHVQQLLEKNQAKQQVICKLSEKVTWDFTHPPTQPPVPLGAADRDFLSQQEKMEHLKDDMEAYRTQNRFLNSEIHQVTKIWRRVAEKEKALLMKCAYLQAKNCQVESKYLAGLRRLQEAAGGEATESSELLRQLTQEALQWEAGEASADGVELSPISEYDEYGFLTVPNYEMEDLKLLAKIQALEVHSHHLLAHEAVERPLRERWAALGDLAPSVELKQLLRAGVPREHRPRVWKWLVQLRVRHLQSPGHYQELLSRGQVREHPAARQIELDLNRTFPNNKHFTCPTSTFPDKLRRVLLAFSWQNPTIGYCQGLNRLAAIALLVLEEEESAFWCLVAIVETIMPADYYSKTLTSSQVDQRVLQDLLLEKLPRLMAHLGQYRVDLSFLTFNWFLVVFADSLISNILLRVWDAFLYEGTKYNEEEILRLQDSLEIYQYLRFFTKTICNSQKLMTIAFNDMNPFPMKQLRQLRRAHRERLEAELHELEQLKAEYLETQSSRGPAVPDGCTSEDEGEGEA</sequence>
<reference key="1">
    <citation type="journal article" date="2010" name="Nature">
        <title>The sequence and de novo assembly of the giant panda genome.</title>
        <authorList>
            <person name="Li R."/>
            <person name="Fan W."/>
            <person name="Tian G."/>
            <person name="Zhu H."/>
            <person name="He L."/>
            <person name="Cai J."/>
            <person name="Huang Q."/>
            <person name="Cai Q."/>
            <person name="Li B."/>
            <person name="Bai Y."/>
            <person name="Zhang Z."/>
            <person name="Zhang Y."/>
            <person name="Wang W."/>
            <person name="Li J."/>
            <person name="Wei F."/>
            <person name="Li H."/>
            <person name="Jian M."/>
            <person name="Li J."/>
            <person name="Zhang Z."/>
            <person name="Nielsen R."/>
            <person name="Li D."/>
            <person name="Gu W."/>
            <person name="Yang Z."/>
            <person name="Xuan Z."/>
            <person name="Ryder O.A."/>
            <person name="Leung F.C."/>
            <person name="Zhou Y."/>
            <person name="Cao J."/>
            <person name="Sun X."/>
            <person name="Fu Y."/>
            <person name="Fang X."/>
            <person name="Guo X."/>
            <person name="Wang B."/>
            <person name="Hou R."/>
            <person name="Shen F."/>
            <person name="Mu B."/>
            <person name="Ni P."/>
            <person name="Lin R."/>
            <person name="Qian W."/>
            <person name="Wang G."/>
            <person name="Yu C."/>
            <person name="Nie W."/>
            <person name="Wang J."/>
            <person name="Wu Z."/>
            <person name="Liang H."/>
            <person name="Min J."/>
            <person name="Wu Q."/>
            <person name="Cheng S."/>
            <person name="Ruan J."/>
            <person name="Wang M."/>
            <person name="Shi Z."/>
            <person name="Wen M."/>
            <person name="Liu B."/>
            <person name="Ren X."/>
            <person name="Zheng H."/>
            <person name="Dong D."/>
            <person name="Cook K."/>
            <person name="Shan G."/>
            <person name="Zhang H."/>
            <person name="Kosiol C."/>
            <person name="Xie X."/>
            <person name="Lu Z."/>
            <person name="Zheng H."/>
            <person name="Li Y."/>
            <person name="Steiner C.C."/>
            <person name="Lam T.T."/>
            <person name="Lin S."/>
            <person name="Zhang Q."/>
            <person name="Li G."/>
            <person name="Tian J."/>
            <person name="Gong T."/>
            <person name="Liu H."/>
            <person name="Zhang D."/>
            <person name="Fang L."/>
            <person name="Ye C."/>
            <person name="Zhang J."/>
            <person name="Hu W."/>
            <person name="Xu A."/>
            <person name="Ren Y."/>
            <person name="Zhang G."/>
            <person name="Bruford M.W."/>
            <person name="Li Q."/>
            <person name="Ma L."/>
            <person name="Guo Y."/>
            <person name="An N."/>
            <person name="Hu Y."/>
            <person name="Zheng Y."/>
            <person name="Shi Y."/>
            <person name="Li Z."/>
            <person name="Liu Q."/>
            <person name="Chen Y."/>
            <person name="Zhao J."/>
            <person name="Qu N."/>
            <person name="Zhao S."/>
            <person name="Tian F."/>
            <person name="Wang X."/>
            <person name="Wang H."/>
            <person name="Xu L."/>
            <person name="Liu X."/>
            <person name="Vinar T."/>
            <person name="Wang Y."/>
            <person name="Lam T.W."/>
            <person name="Yiu S.M."/>
            <person name="Liu S."/>
            <person name="Zhang H."/>
            <person name="Li D."/>
            <person name="Huang Y."/>
            <person name="Wang X."/>
            <person name="Yang G."/>
            <person name="Jiang Z."/>
            <person name="Wang J."/>
            <person name="Qin N."/>
            <person name="Li L."/>
            <person name="Li J."/>
            <person name="Bolund L."/>
            <person name="Kristiansen K."/>
            <person name="Wong G.K."/>
            <person name="Olson M."/>
            <person name="Zhang X."/>
            <person name="Li S."/>
            <person name="Yang H."/>
            <person name="Wang J."/>
            <person name="Wang J."/>
        </authorList>
    </citation>
    <scope>NUCLEOTIDE SEQUENCE [LARGE SCALE GENOMIC DNA]</scope>
</reference>
<accession>D2H0G5</accession>
<gene>
    <name type="primary">TBC1D2</name>
    <name type="synonym">TBC1D2A</name>
    <name type="ORF">PANDA_002915</name>
</gene>
<proteinExistence type="inferred from homology"/>
<dbReference type="EMBL" id="GL192407">
    <property type="protein sequence ID" value="EFB16841.1"/>
    <property type="molecule type" value="Genomic_DNA"/>
</dbReference>
<dbReference type="SMR" id="D2H0G5"/>
<dbReference type="STRING" id="9646.ENSAMEP00000004867"/>
<dbReference type="eggNOG" id="KOG2058">
    <property type="taxonomic scope" value="Eukaryota"/>
</dbReference>
<dbReference type="HOGENOM" id="CLU_011278_0_0_1"/>
<dbReference type="InParanoid" id="D2H0G5"/>
<dbReference type="Proteomes" id="UP000008912">
    <property type="component" value="Unassembled WGS sequence"/>
</dbReference>
<dbReference type="GO" id="GO:0070161">
    <property type="term" value="C:anchoring junction"/>
    <property type="evidence" value="ECO:0007669"/>
    <property type="project" value="UniProtKB-SubCell"/>
</dbReference>
<dbReference type="GO" id="GO:0030054">
    <property type="term" value="C:cell junction"/>
    <property type="evidence" value="ECO:0000250"/>
    <property type="project" value="UniProtKB"/>
</dbReference>
<dbReference type="GO" id="GO:0031410">
    <property type="term" value="C:cytoplasmic vesicle"/>
    <property type="evidence" value="ECO:0000250"/>
    <property type="project" value="UniProtKB"/>
</dbReference>
<dbReference type="GO" id="GO:0005096">
    <property type="term" value="F:GTPase activator activity"/>
    <property type="evidence" value="ECO:0000250"/>
    <property type="project" value="UniProtKB"/>
</dbReference>
<dbReference type="GO" id="GO:0031267">
    <property type="term" value="F:small GTPase binding"/>
    <property type="evidence" value="ECO:0007669"/>
    <property type="project" value="TreeGrafter"/>
</dbReference>
<dbReference type="GO" id="GO:0043547">
    <property type="term" value="P:positive regulation of GTPase activity"/>
    <property type="evidence" value="ECO:0000250"/>
    <property type="project" value="UniProtKB"/>
</dbReference>
<dbReference type="CDD" id="cd01265">
    <property type="entry name" value="PH_TBC1D2A"/>
    <property type="match status" value="1"/>
</dbReference>
<dbReference type="FunFam" id="1.10.8.270:FF:000014">
    <property type="entry name" value="Putative TBC1 domain family member 2B"/>
    <property type="match status" value="1"/>
</dbReference>
<dbReference type="FunFam" id="2.30.29.30:FF:000248">
    <property type="entry name" value="TBC1 domain family member 2A isoform X1"/>
    <property type="match status" value="1"/>
</dbReference>
<dbReference type="FunFam" id="1.10.472.80:FF:000018">
    <property type="entry name" value="TBC1 domain family member 2B"/>
    <property type="match status" value="1"/>
</dbReference>
<dbReference type="Gene3D" id="2.30.29.30">
    <property type="entry name" value="Pleckstrin-homology domain (PH domain)/Phosphotyrosine-binding domain (PTB)"/>
    <property type="match status" value="1"/>
</dbReference>
<dbReference type="Gene3D" id="1.10.8.270">
    <property type="entry name" value="putative rabgap domain of human tbc1 domain family member 14 like domains"/>
    <property type="match status" value="1"/>
</dbReference>
<dbReference type="Gene3D" id="1.10.472.80">
    <property type="entry name" value="Ypt/Rab-GAP domain of gyp1p, domain 3"/>
    <property type="match status" value="1"/>
</dbReference>
<dbReference type="InterPro" id="IPR011993">
    <property type="entry name" value="PH-like_dom_sf"/>
</dbReference>
<dbReference type="InterPro" id="IPR001849">
    <property type="entry name" value="PH_domain"/>
</dbReference>
<dbReference type="InterPro" id="IPR000195">
    <property type="entry name" value="Rab-GAP-TBC_dom"/>
</dbReference>
<dbReference type="InterPro" id="IPR035969">
    <property type="entry name" value="Rab-GAP_TBC_sf"/>
</dbReference>
<dbReference type="InterPro" id="IPR050302">
    <property type="entry name" value="Rab_GAP_TBC_domain"/>
</dbReference>
<dbReference type="PANTHER" id="PTHR47219">
    <property type="entry name" value="RAB GTPASE-ACTIVATING PROTEIN 1-LIKE"/>
    <property type="match status" value="1"/>
</dbReference>
<dbReference type="PANTHER" id="PTHR47219:SF20">
    <property type="entry name" value="TBC1 DOMAIN FAMILY MEMBER 2B"/>
    <property type="match status" value="1"/>
</dbReference>
<dbReference type="Pfam" id="PF00169">
    <property type="entry name" value="PH"/>
    <property type="match status" value="1"/>
</dbReference>
<dbReference type="Pfam" id="PF00566">
    <property type="entry name" value="RabGAP-TBC"/>
    <property type="match status" value="1"/>
</dbReference>
<dbReference type="SMART" id="SM00233">
    <property type="entry name" value="PH"/>
    <property type="match status" value="1"/>
</dbReference>
<dbReference type="SMART" id="SM00164">
    <property type="entry name" value="TBC"/>
    <property type="match status" value="1"/>
</dbReference>
<dbReference type="SUPFAM" id="SSF50729">
    <property type="entry name" value="PH domain-like"/>
    <property type="match status" value="1"/>
</dbReference>
<dbReference type="SUPFAM" id="SSF47923">
    <property type="entry name" value="Ypt/Rab-GAP domain of gyp1p"/>
    <property type="match status" value="2"/>
</dbReference>
<dbReference type="PROSITE" id="PS50003">
    <property type="entry name" value="PH_DOMAIN"/>
    <property type="match status" value="1"/>
</dbReference>
<dbReference type="PROSITE" id="PS50086">
    <property type="entry name" value="TBC_RABGAP"/>
    <property type="match status" value="1"/>
</dbReference>
<name>TBD2A_AILME</name>
<organism>
    <name type="scientific">Ailuropoda melanoleuca</name>
    <name type="common">Giant panda</name>
    <dbReference type="NCBI Taxonomy" id="9646"/>
    <lineage>
        <taxon>Eukaryota</taxon>
        <taxon>Metazoa</taxon>
        <taxon>Chordata</taxon>
        <taxon>Craniata</taxon>
        <taxon>Vertebrata</taxon>
        <taxon>Euteleostomi</taxon>
        <taxon>Mammalia</taxon>
        <taxon>Eutheria</taxon>
        <taxon>Laurasiatheria</taxon>
        <taxon>Carnivora</taxon>
        <taxon>Caniformia</taxon>
        <taxon>Ursidae</taxon>
        <taxon>Ailuropoda</taxon>
    </lineage>
</organism>
<comment type="function">
    <text evidence="1">Acts as a GTPase-activating protein for RAB7A. Signal effector acting as a linker between RAC1 and RAB7A, leading to RAB7A inactivation and subsequent inhibition of cadherin degradation and reduced cell-cell adhesion (By similarity).</text>
</comment>
<comment type="subunit">
    <text evidence="1">Interacts with activated RAC1 and CDH1.</text>
</comment>
<comment type="subcellular location">
    <subcellularLocation>
        <location evidence="1">Cytoplasm</location>
    </subcellularLocation>
    <subcellularLocation>
        <location evidence="1">Cytoplasmic vesicle</location>
    </subcellularLocation>
    <subcellularLocation>
        <location evidence="1">Cell junction</location>
    </subcellularLocation>
</comment>
<protein>
    <recommendedName>
        <fullName>TBC1 domain family member 2A</fullName>
    </recommendedName>
</protein>